<keyword id="KW-1003">Cell membrane</keyword>
<keyword id="KW-0472">Membrane</keyword>
<keyword id="KW-1185">Reference proteome</keyword>
<keyword id="KW-0804">Transcription</keyword>
<keyword id="KW-0805">Transcription regulation</keyword>
<keyword id="KW-0812">Transmembrane</keyword>
<keyword id="KW-1133">Transmembrane helix</keyword>
<protein>
    <recommendedName>
        <fullName>Anti-sigma-K factor RskA</fullName>
    </recommendedName>
    <alternativeName>
        <fullName>Regulator of SigK</fullName>
    </alternativeName>
    <alternativeName>
        <fullName>Sigma-K anti-sigma factor RskA</fullName>
    </alternativeName>
</protein>
<comment type="function">
    <text evidence="1">An anti-sigma factor for extracytoplasmic function (ECF) sigma factor SigK. ECF sigma factors are held in an inactive form by an anti-sigma factor until released by regulated intramembrane proteolysis (RIP). RIP occurs when an extracytoplasmic signal triggers a concerted proteolytic cascade to transmit information and elicit cellular responses. The membrane-spanning regulatory substrate protein is first cut extracytoplasmically (site-1 protease, S1P), then within the membrane itself (site-2 protease, S2P, Rip1), while cytoplasmic proteases finish degrading the regulatory protein, liberating the sigma factor (By similarity).</text>
</comment>
<comment type="subunit">
    <text evidence="1">Interacts with ECF RNA polymerase sigma factor SigK; this inhibits the interaction of SigK with the RNA polymerase catalytic core and leads to a decreased expression of SigK-regulated genes.</text>
</comment>
<comment type="subcellular location">
    <subcellularLocation>
        <location evidence="3">Cell membrane</location>
        <topology evidence="3">Single-pass membrane protein</topology>
    </subcellularLocation>
</comment>
<comment type="similarity">
    <text evidence="3">Belongs to the anti-sigma-K factor family.</text>
</comment>
<proteinExistence type="inferred from homology"/>
<sequence length="232" mass="23883">MTEHTDFELLELATPYALNAVSDDERADIDRRVAAAPSPVAAAFNDEVRAVRETMAVVSAATTAEPPAHLRTAILDATKPEVRRQSRWRTAAFASAAAIAVGLGAFGLGVLTRPSPPPTVAEQVLTAPDVRTVSRPLGAGTATVVFSRDRNTGLLVMNNVAPPSRGTVYQMWLLGGAKGPRSAGTMGTAAVTPSTTATLTDLGASTALAFTVEPGTGSPQPTGTILAELPLG</sequence>
<accession>P9WGX4</accession>
<accession>L0T3K9</accession>
<accession>O53729</accession>
<accession>Q7D9T4</accession>
<gene>
    <name type="primary">rskA</name>
    <name type="ordered locus">MT0460</name>
</gene>
<organism>
    <name type="scientific">Mycobacterium tuberculosis (strain CDC 1551 / Oshkosh)</name>
    <dbReference type="NCBI Taxonomy" id="83331"/>
    <lineage>
        <taxon>Bacteria</taxon>
        <taxon>Bacillati</taxon>
        <taxon>Actinomycetota</taxon>
        <taxon>Actinomycetes</taxon>
        <taxon>Mycobacteriales</taxon>
        <taxon>Mycobacteriaceae</taxon>
        <taxon>Mycobacterium</taxon>
        <taxon>Mycobacterium tuberculosis complex</taxon>
    </lineage>
</organism>
<feature type="chain" id="PRO_0000428286" description="Anti-sigma-K factor RskA">
    <location>
        <begin position="1"/>
        <end position="232"/>
    </location>
</feature>
<feature type="topological domain" description="Cytoplasmic" evidence="2">
    <location>
        <begin position="1"/>
        <end position="90"/>
    </location>
</feature>
<feature type="transmembrane region" description="Helical" evidence="2">
    <location>
        <begin position="91"/>
        <end position="111"/>
    </location>
</feature>
<feature type="topological domain" description="Extracellular" evidence="2">
    <location>
        <begin position="112"/>
        <end position="232"/>
    </location>
</feature>
<evidence type="ECO:0000250" key="1"/>
<evidence type="ECO:0000255" key="2"/>
<evidence type="ECO:0000305" key="3"/>
<reference key="1">
    <citation type="journal article" date="2002" name="J. Bacteriol.">
        <title>Whole-genome comparison of Mycobacterium tuberculosis clinical and laboratory strains.</title>
        <authorList>
            <person name="Fleischmann R.D."/>
            <person name="Alland D."/>
            <person name="Eisen J.A."/>
            <person name="Carpenter L."/>
            <person name="White O."/>
            <person name="Peterson J.D."/>
            <person name="DeBoy R.T."/>
            <person name="Dodson R.J."/>
            <person name="Gwinn M.L."/>
            <person name="Haft D.H."/>
            <person name="Hickey E.K."/>
            <person name="Kolonay J.F."/>
            <person name="Nelson W.C."/>
            <person name="Umayam L.A."/>
            <person name="Ermolaeva M.D."/>
            <person name="Salzberg S.L."/>
            <person name="Delcher A."/>
            <person name="Utterback T.R."/>
            <person name="Weidman J.F."/>
            <person name="Khouri H.M."/>
            <person name="Gill J."/>
            <person name="Mikula A."/>
            <person name="Bishai W."/>
            <person name="Jacobs W.R. Jr."/>
            <person name="Venter J.C."/>
            <person name="Fraser C.M."/>
        </authorList>
    </citation>
    <scope>NUCLEOTIDE SEQUENCE [LARGE SCALE GENOMIC DNA]</scope>
    <source>
        <strain>CDC 1551 / Oshkosh</strain>
    </source>
</reference>
<name>RSKA_MYCTO</name>
<dbReference type="EMBL" id="AE000516">
    <property type="protein sequence ID" value="AAK44683.1"/>
    <property type="molecule type" value="Genomic_DNA"/>
</dbReference>
<dbReference type="PIR" id="E70830">
    <property type="entry name" value="E70830"/>
</dbReference>
<dbReference type="RefSeq" id="WP_003898455.1">
    <property type="nucleotide sequence ID" value="NZ_KK341227.1"/>
</dbReference>
<dbReference type="SMR" id="P9WGX4"/>
<dbReference type="KEGG" id="mtc:MT0460"/>
<dbReference type="PATRIC" id="fig|83331.31.peg.487"/>
<dbReference type="HOGENOM" id="CLU_075802_1_1_11"/>
<dbReference type="Proteomes" id="UP000001020">
    <property type="component" value="Chromosome"/>
</dbReference>
<dbReference type="GO" id="GO:0005886">
    <property type="term" value="C:plasma membrane"/>
    <property type="evidence" value="ECO:0007669"/>
    <property type="project" value="UniProtKB-SubCell"/>
</dbReference>
<dbReference type="GO" id="GO:0016989">
    <property type="term" value="F:sigma factor antagonist activity"/>
    <property type="evidence" value="ECO:0007669"/>
    <property type="project" value="TreeGrafter"/>
</dbReference>
<dbReference type="GO" id="GO:0006417">
    <property type="term" value="P:regulation of translation"/>
    <property type="evidence" value="ECO:0007669"/>
    <property type="project" value="TreeGrafter"/>
</dbReference>
<dbReference type="Gene3D" id="1.10.10.1320">
    <property type="entry name" value="Anti-sigma factor, zinc-finger domain"/>
    <property type="match status" value="1"/>
</dbReference>
<dbReference type="InterPro" id="IPR051474">
    <property type="entry name" value="Anti-sigma-K/W_factor"/>
</dbReference>
<dbReference type="InterPro" id="IPR041916">
    <property type="entry name" value="Anti_sigma_zinc_sf"/>
</dbReference>
<dbReference type="InterPro" id="IPR018764">
    <property type="entry name" value="RskA_C"/>
</dbReference>
<dbReference type="InterPro" id="IPR053877">
    <property type="entry name" value="RskA_N"/>
</dbReference>
<dbReference type="PANTHER" id="PTHR37461">
    <property type="entry name" value="ANTI-SIGMA-K FACTOR RSKA"/>
    <property type="match status" value="1"/>
</dbReference>
<dbReference type="PANTHER" id="PTHR37461:SF1">
    <property type="entry name" value="ANTI-SIGMA-K FACTOR RSKA"/>
    <property type="match status" value="1"/>
</dbReference>
<dbReference type="Pfam" id="PF10099">
    <property type="entry name" value="RskA_C"/>
    <property type="match status" value="1"/>
</dbReference>
<dbReference type="Pfam" id="PF22618">
    <property type="entry name" value="RskA_N"/>
    <property type="match status" value="1"/>
</dbReference>